<sequence length="126" mass="13970">MPTINQLVRKGRASETTKSKSPALQDCPQRRGVCTRVYTTTPKKPNSALRKVAKVRLTNGFEVISYIGGEGHNLQEHSVVLIRGGRVKDLPGVRYHMVRGSLDTQGVKDRRQARSKYGAKRAKAAK</sequence>
<gene>
    <name evidence="2" type="primary">rpsL</name>
    <name type="ordered locus">BMA10229_A1919</name>
</gene>
<keyword id="KW-0488">Methylation</keyword>
<keyword id="KW-0687">Ribonucleoprotein</keyword>
<keyword id="KW-0689">Ribosomal protein</keyword>
<keyword id="KW-0694">RNA-binding</keyword>
<keyword id="KW-0699">rRNA-binding</keyword>
<keyword id="KW-0820">tRNA-binding</keyword>
<reference key="1">
    <citation type="journal article" date="2010" name="Genome Biol. Evol.">
        <title>Continuing evolution of Burkholderia mallei through genome reduction and large-scale rearrangements.</title>
        <authorList>
            <person name="Losada L."/>
            <person name="Ronning C.M."/>
            <person name="DeShazer D."/>
            <person name="Woods D."/>
            <person name="Fedorova N."/>
            <person name="Kim H.S."/>
            <person name="Shabalina S.A."/>
            <person name="Pearson T.R."/>
            <person name="Brinkac L."/>
            <person name="Tan P."/>
            <person name="Nandi T."/>
            <person name="Crabtree J."/>
            <person name="Badger J."/>
            <person name="Beckstrom-Sternberg S."/>
            <person name="Saqib M."/>
            <person name="Schutzer S.E."/>
            <person name="Keim P."/>
            <person name="Nierman W.C."/>
        </authorList>
    </citation>
    <scope>NUCLEOTIDE SEQUENCE [LARGE SCALE GENOMIC DNA]</scope>
    <source>
        <strain>NCTC 10229</strain>
    </source>
</reference>
<proteinExistence type="inferred from homology"/>
<protein>
    <recommendedName>
        <fullName evidence="2">Small ribosomal subunit protein uS12</fullName>
    </recommendedName>
    <alternativeName>
        <fullName evidence="4">30S ribosomal protein S12</fullName>
    </alternativeName>
</protein>
<organism>
    <name type="scientific">Burkholderia mallei (strain NCTC 10229)</name>
    <dbReference type="NCBI Taxonomy" id="412022"/>
    <lineage>
        <taxon>Bacteria</taxon>
        <taxon>Pseudomonadati</taxon>
        <taxon>Pseudomonadota</taxon>
        <taxon>Betaproteobacteria</taxon>
        <taxon>Burkholderiales</taxon>
        <taxon>Burkholderiaceae</taxon>
        <taxon>Burkholderia</taxon>
        <taxon>pseudomallei group</taxon>
    </lineage>
</organism>
<name>RS12_BURM9</name>
<comment type="function">
    <text evidence="2">With S4 and S5 plays an important role in translational accuracy.</text>
</comment>
<comment type="function">
    <text evidence="2">Interacts with and stabilizes bases of the 16S rRNA that are involved in tRNA selection in the A site and with the mRNA backbone. Located at the interface of the 30S and 50S subunits, it traverses the body of the 30S subunit contacting proteins on the other side and probably holding the rRNA structure together. The combined cluster of proteins S8, S12 and S17 appears to hold together the shoulder and platform of the 30S subunit.</text>
</comment>
<comment type="subunit">
    <text evidence="2">Part of the 30S ribosomal subunit. Contacts proteins S8 and S17. May interact with IF1 in the 30S initiation complex.</text>
</comment>
<comment type="similarity">
    <text evidence="2">Belongs to the universal ribosomal protein uS12 family.</text>
</comment>
<accession>A2S7H1</accession>
<evidence type="ECO:0000250" key="1"/>
<evidence type="ECO:0000255" key="2">
    <source>
        <dbReference type="HAMAP-Rule" id="MF_00403"/>
    </source>
</evidence>
<evidence type="ECO:0000256" key="3">
    <source>
        <dbReference type="SAM" id="MobiDB-lite"/>
    </source>
</evidence>
<evidence type="ECO:0000305" key="4"/>
<dbReference type="EMBL" id="CP000546">
    <property type="protein sequence ID" value="ABN03180.1"/>
    <property type="molecule type" value="Genomic_DNA"/>
</dbReference>
<dbReference type="RefSeq" id="WP_004198362.1">
    <property type="nucleotide sequence ID" value="NC_008836.1"/>
</dbReference>
<dbReference type="SMR" id="A2S7H1"/>
<dbReference type="GeneID" id="92980324"/>
<dbReference type="KEGG" id="bml:BMA10229_A1919"/>
<dbReference type="HOGENOM" id="CLU_104295_1_2_4"/>
<dbReference type="Proteomes" id="UP000002283">
    <property type="component" value="Chromosome I"/>
</dbReference>
<dbReference type="GO" id="GO:0015935">
    <property type="term" value="C:small ribosomal subunit"/>
    <property type="evidence" value="ECO:0007669"/>
    <property type="project" value="InterPro"/>
</dbReference>
<dbReference type="GO" id="GO:0019843">
    <property type="term" value="F:rRNA binding"/>
    <property type="evidence" value="ECO:0007669"/>
    <property type="project" value="UniProtKB-UniRule"/>
</dbReference>
<dbReference type="GO" id="GO:0003735">
    <property type="term" value="F:structural constituent of ribosome"/>
    <property type="evidence" value="ECO:0007669"/>
    <property type="project" value="InterPro"/>
</dbReference>
<dbReference type="GO" id="GO:0000049">
    <property type="term" value="F:tRNA binding"/>
    <property type="evidence" value="ECO:0007669"/>
    <property type="project" value="UniProtKB-UniRule"/>
</dbReference>
<dbReference type="GO" id="GO:0006412">
    <property type="term" value="P:translation"/>
    <property type="evidence" value="ECO:0007669"/>
    <property type="project" value="UniProtKB-UniRule"/>
</dbReference>
<dbReference type="CDD" id="cd03368">
    <property type="entry name" value="Ribosomal_S12"/>
    <property type="match status" value="1"/>
</dbReference>
<dbReference type="FunFam" id="2.40.50.140:FF:000001">
    <property type="entry name" value="30S ribosomal protein S12"/>
    <property type="match status" value="1"/>
</dbReference>
<dbReference type="Gene3D" id="2.40.50.140">
    <property type="entry name" value="Nucleic acid-binding proteins"/>
    <property type="match status" value="1"/>
</dbReference>
<dbReference type="HAMAP" id="MF_00403_B">
    <property type="entry name" value="Ribosomal_uS12_B"/>
    <property type="match status" value="1"/>
</dbReference>
<dbReference type="InterPro" id="IPR012340">
    <property type="entry name" value="NA-bd_OB-fold"/>
</dbReference>
<dbReference type="InterPro" id="IPR006032">
    <property type="entry name" value="Ribosomal_uS12"/>
</dbReference>
<dbReference type="InterPro" id="IPR005679">
    <property type="entry name" value="Ribosomal_uS12_bac"/>
</dbReference>
<dbReference type="NCBIfam" id="TIGR00981">
    <property type="entry name" value="rpsL_bact"/>
    <property type="match status" value="1"/>
</dbReference>
<dbReference type="PANTHER" id="PTHR11652">
    <property type="entry name" value="30S RIBOSOMAL PROTEIN S12 FAMILY MEMBER"/>
    <property type="match status" value="1"/>
</dbReference>
<dbReference type="Pfam" id="PF00164">
    <property type="entry name" value="Ribosom_S12_S23"/>
    <property type="match status" value="1"/>
</dbReference>
<dbReference type="PIRSF" id="PIRSF002133">
    <property type="entry name" value="Ribosomal_S12/S23"/>
    <property type="match status" value="1"/>
</dbReference>
<dbReference type="PRINTS" id="PR01034">
    <property type="entry name" value="RIBOSOMALS12"/>
</dbReference>
<dbReference type="SUPFAM" id="SSF50249">
    <property type="entry name" value="Nucleic acid-binding proteins"/>
    <property type="match status" value="1"/>
</dbReference>
<dbReference type="PROSITE" id="PS00055">
    <property type="entry name" value="RIBOSOMAL_S12"/>
    <property type="match status" value="1"/>
</dbReference>
<feature type="chain" id="PRO_1000049773" description="Small ribosomal subunit protein uS12">
    <location>
        <begin position="1"/>
        <end position="126"/>
    </location>
</feature>
<feature type="region of interest" description="Disordered" evidence="3">
    <location>
        <begin position="1"/>
        <end position="26"/>
    </location>
</feature>
<feature type="region of interest" description="Disordered" evidence="3">
    <location>
        <begin position="102"/>
        <end position="126"/>
    </location>
</feature>
<feature type="compositionally biased region" description="Basic residues" evidence="3">
    <location>
        <begin position="113"/>
        <end position="126"/>
    </location>
</feature>
<feature type="modified residue" description="3-methylthioaspartic acid" evidence="1">
    <location>
        <position position="89"/>
    </location>
</feature>